<protein>
    <recommendedName>
        <fullName evidence="1">Large ribosomal subunit protein uL22</fullName>
    </recommendedName>
    <alternativeName>
        <fullName evidence="2">50S ribosomal protein L22</fullName>
    </alternativeName>
</protein>
<dbReference type="EMBL" id="CP000655">
    <property type="protein sequence ID" value="ABP33280.1"/>
    <property type="molecule type" value="Genomic_DNA"/>
</dbReference>
<dbReference type="SMR" id="A4SUW6"/>
<dbReference type="KEGG" id="pnu:Pnuc_0058"/>
<dbReference type="eggNOG" id="COG0091">
    <property type="taxonomic scope" value="Bacteria"/>
</dbReference>
<dbReference type="HOGENOM" id="CLU_083987_3_3_4"/>
<dbReference type="Proteomes" id="UP000000231">
    <property type="component" value="Chromosome"/>
</dbReference>
<dbReference type="GO" id="GO:0022625">
    <property type="term" value="C:cytosolic large ribosomal subunit"/>
    <property type="evidence" value="ECO:0007669"/>
    <property type="project" value="TreeGrafter"/>
</dbReference>
<dbReference type="GO" id="GO:0019843">
    <property type="term" value="F:rRNA binding"/>
    <property type="evidence" value="ECO:0007669"/>
    <property type="project" value="UniProtKB-UniRule"/>
</dbReference>
<dbReference type="GO" id="GO:0003735">
    <property type="term" value="F:structural constituent of ribosome"/>
    <property type="evidence" value="ECO:0007669"/>
    <property type="project" value="InterPro"/>
</dbReference>
<dbReference type="GO" id="GO:0006412">
    <property type="term" value="P:translation"/>
    <property type="evidence" value="ECO:0007669"/>
    <property type="project" value="UniProtKB-UniRule"/>
</dbReference>
<dbReference type="CDD" id="cd00336">
    <property type="entry name" value="Ribosomal_L22"/>
    <property type="match status" value="1"/>
</dbReference>
<dbReference type="FunFam" id="3.90.470.10:FF:000001">
    <property type="entry name" value="50S ribosomal protein L22"/>
    <property type="match status" value="1"/>
</dbReference>
<dbReference type="Gene3D" id="3.90.470.10">
    <property type="entry name" value="Ribosomal protein L22/L17"/>
    <property type="match status" value="1"/>
</dbReference>
<dbReference type="HAMAP" id="MF_01331_B">
    <property type="entry name" value="Ribosomal_uL22_B"/>
    <property type="match status" value="1"/>
</dbReference>
<dbReference type="InterPro" id="IPR001063">
    <property type="entry name" value="Ribosomal_uL22"/>
</dbReference>
<dbReference type="InterPro" id="IPR005727">
    <property type="entry name" value="Ribosomal_uL22_bac/chlpt-type"/>
</dbReference>
<dbReference type="InterPro" id="IPR047867">
    <property type="entry name" value="Ribosomal_uL22_bac/org-type"/>
</dbReference>
<dbReference type="InterPro" id="IPR018260">
    <property type="entry name" value="Ribosomal_uL22_CS"/>
</dbReference>
<dbReference type="InterPro" id="IPR036394">
    <property type="entry name" value="Ribosomal_uL22_sf"/>
</dbReference>
<dbReference type="NCBIfam" id="TIGR01044">
    <property type="entry name" value="rplV_bact"/>
    <property type="match status" value="1"/>
</dbReference>
<dbReference type="PANTHER" id="PTHR13501">
    <property type="entry name" value="CHLOROPLAST 50S RIBOSOMAL PROTEIN L22-RELATED"/>
    <property type="match status" value="1"/>
</dbReference>
<dbReference type="PANTHER" id="PTHR13501:SF8">
    <property type="entry name" value="LARGE RIBOSOMAL SUBUNIT PROTEIN UL22M"/>
    <property type="match status" value="1"/>
</dbReference>
<dbReference type="Pfam" id="PF00237">
    <property type="entry name" value="Ribosomal_L22"/>
    <property type="match status" value="1"/>
</dbReference>
<dbReference type="SUPFAM" id="SSF54843">
    <property type="entry name" value="Ribosomal protein L22"/>
    <property type="match status" value="1"/>
</dbReference>
<dbReference type="PROSITE" id="PS00464">
    <property type="entry name" value="RIBOSOMAL_L22"/>
    <property type="match status" value="1"/>
</dbReference>
<organism>
    <name type="scientific">Polynucleobacter asymbioticus (strain DSM 18221 / CIP 109841 / QLW-P1DMWA-1)</name>
    <name type="common">Polynucleobacter necessarius subsp. asymbioticus</name>
    <dbReference type="NCBI Taxonomy" id="312153"/>
    <lineage>
        <taxon>Bacteria</taxon>
        <taxon>Pseudomonadati</taxon>
        <taxon>Pseudomonadota</taxon>
        <taxon>Betaproteobacteria</taxon>
        <taxon>Burkholderiales</taxon>
        <taxon>Burkholderiaceae</taxon>
        <taxon>Polynucleobacter</taxon>
    </lineage>
</organism>
<name>RL22_POLAQ</name>
<proteinExistence type="inferred from homology"/>
<evidence type="ECO:0000255" key="1">
    <source>
        <dbReference type="HAMAP-Rule" id="MF_01331"/>
    </source>
</evidence>
<evidence type="ECO:0000305" key="2"/>
<comment type="function">
    <text evidence="1">This protein binds specifically to 23S rRNA; its binding is stimulated by other ribosomal proteins, e.g. L4, L17, and L20. It is important during the early stages of 50S assembly. It makes multiple contacts with different domains of the 23S rRNA in the assembled 50S subunit and ribosome (By similarity).</text>
</comment>
<comment type="function">
    <text evidence="1">The globular domain of the protein is located near the polypeptide exit tunnel on the outside of the subunit, while an extended beta-hairpin is found that lines the wall of the exit tunnel in the center of the 70S ribosome.</text>
</comment>
<comment type="subunit">
    <text evidence="1">Part of the 50S ribosomal subunit.</text>
</comment>
<comment type="similarity">
    <text evidence="1">Belongs to the universal ribosomal protein uL22 family.</text>
</comment>
<feature type="chain" id="PRO_1000086561" description="Large ribosomal subunit protein uL22">
    <location>
        <begin position="1"/>
        <end position="109"/>
    </location>
</feature>
<sequence length="109" mass="11921">MEVKAIHKSARISAQKTRLVADQIRGLPIARALNILNFSPKKAAFIVKKVVESAMANAEHNKGADIDELKVSTIIVDKGTSLKRFTARAKGRGNQIEKQTCHITVTLSN</sequence>
<keyword id="KW-1185">Reference proteome</keyword>
<keyword id="KW-0687">Ribonucleoprotein</keyword>
<keyword id="KW-0689">Ribosomal protein</keyword>
<keyword id="KW-0694">RNA-binding</keyword>
<keyword id="KW-0699">rRNA-binding</keyword>
<gene>
    <name evidence="1" type="primary">rplV</name>
    <name type="ordered locus">Pnuc_0058</name>
</gene>
<accession>A4SUW6</accession>
<reference key="1">
    <citation type="journal article" date="2012" name="Stand. Genomic Sci.">
        <title>Complete genome sequence of Polynucleobacter necessarius subsp. asymbioticus type strain (QLW-P1DMWA-1(T)).</title>
        <authorList>
            <person name="Meincke L."/>
            <person name="Copeland A."/>
            <person name="Lapidus A."/>
            <person name="Lucas S."/>
            <person name="Berry K.W."/>
            <person name="Del Rio T.G."/>
            <person name="Hammon N."/>
            <person name="Dalin E."/>
            <person name="Tice H."/>
            <person name="Pitluck S."/>
            <person name="Richardson P."/>
            <person name="Bruce D."/>
            <person name="Goodwin L."/>
            <person name="Han C."/>
            <person name="Tapia R."/>
            <person name="Detter J.C."/>
            <person name="Schmutz J."/>
            <person name="Brettin T."/>
            <person name="Larimer F."/>
            <person name="Land M."/>
            <person name="Hauser L."/>
            <person name="Kyrpides N.C."/>
            <person name="Ivanova N."/>
            <person name="Goker M."/>
            <person name="Woyke T."/>
            <person name="Wu Q.L."/>
            <person name="Pockl M."/>
            <person name="Hahn M.W."/>
            <person name="Klenk H.P."/>
        </authorList>
    </citation>
    <scope>NUCLEOTIDE SEQUENCE [LARGE SCALE GENOMIC DNA]</scope>
    <source>
        <strain>DSM 18221 / CIP 109841 / QLW-P1DMWA-1</strain>
    </source>
</reference>